<gene>
    <name type="primary">SKIP11</name>
    <name type="ordered locus">At2g02870</name>
    <name type="ORF">T17M13.4</name>
</gene>
<protein>
    <recommendedName>
        <fullName>F-box/kelch-repeat protein SKIP11</fullName>
    </recommendedName>
    <alternativeName>
        <fullName>SKP1-interacting partner 11</fullName>
    </alternativeName>
</protein>
<reference key="1">
    <citation type="journal article" date="1999" name="Nature">
        <title>Sequence and analysis of chromosome 2 of the plant Arabidopsis thaliana.</title>
        <authorList>
            <person name="Lin X."/>
            <person name="Kaul S."/>
            <person name="Rounsley S.D."/>
            <person name="Shea T.P."/>
            <person name="Benito M.-I."/>
            <person name="Town C.D."/>
            <person name="Fujii C.Y."/>
            <person name="Mason T.M."/>
            <person name="Bowman C.L."/>
            <person name="Barnstead M.E."/>
            <person name="Feldblyum T.V."/>
            <person name="Buell C.R."/>
            <person name="Ketchum K.A."/>
            <person name="Lee J.J."/>
            <person name="Ronning C.M."/>
            <person name="Koo H.L."/>
            <person name="Moffat K.S."/>
            <person name="Cronin L.A."/>
            <person name="Shen M."/>
            <person name="Pai G."/>
            <person name="Van Aken S."/>
            <person name="Umayam L."/>
            <person name="Tallon L.J."/>
            <person name="Gill J.E."/>
            <person name="Adams M.D."/>
            <person name="Carrera A.J."/>
            <person name="Creasy T.H."/>
            <person name="Goodman H.M."/>
            <person name="Somerville C.R."/>
            <person name="Copenhaver G.P."/>
            <person name="Preuss D."/>
            <person name="Nierman W.C."/>
            <person name="White O."/>
            <person name="Eisen J.A."/>
            <person name="Salzberg S.L."/>
            <person name="Fraser C.M."/>
            <person name="Venter J.C."/>
        </authorList>
    </citation>
    <scope>NUCLEOTIDE SEQUENCE [LARGE SCALE GENOMIC DNA]</scope>
    <source>
        <strain>cv. Columbia</strain>
    </source>
</reference>
<reference key="2">
    <citation type="journal article" date="2017" name="Plant J.">
        <title>Araport11: a complete reannotation of the Arabidopsis thaliana reference genome.</title>
        <authorList>
            <person name="Cheng C.Y."/>
            <person name="Krishnakumar V."/>
            <person name="Chan A.P."/>
            <person name="Thibaud-Nissen F."/>
            <person name="Schobel S."/>
            <person name="Town C.D."/>
        </authorList>
    </citation>
    <scope>GENOME REANNOTATION</scope>
    <source>
        <strain>cv. Columbia</strain>
    </source>
</reference>
<reference key="3">
    <citation type="journal article" date="2003" name="Science">
        <title>Empirical analysis of transcriptional activity in the Arabidopsis genome.</title>
        <authorList>
            <person name="Yamada K."/>
            <person name="Lim J."/>
            <person name="Dale J.M."/>
            <person name="Chen H."/>
            <person name="Shinn P."/>
            <person name="Palm C.J."/>
            <person name="Southwick A.M."/>
            <person name="Wu H.C."/>
            <person name="Kim C.J."/>
            <person name="Nguyen M."/>
            <person name="Pham P.K."/>
            <person name="Cheuk R.F."/>
            <person name="Karlin-Newmann G."/>
            <person name="Liu S.X."/>
            <person name="Lam B."/>
            <person name="Sakano H."/>
            <person name="Wu T."/>
            <person name="Yu G."/>
            <person name="Miranda M."/>
            <person name="Quach H.L."/>
            <person name="Tripp M."/>
            <person name="Chang C.H."/>
            <person name="Lee J.M."/>
            <person name="Toriumi M.J."/>
            <person name="Chan M.M."/>
            <person name="Tang C.C."/>
            <person name="Onodera C.S."/>
            <person name="Deng J.M."/>
            <person name="Akiyama K."/>
            <person name="Ansari Y."/>
            <person name="Arakawa T."/>
            <person name="Banh J."/>
            <person name="Banno F."/>
            <person name="Bowser L."/>
            <person name="Brooks S.Y."/>
            <person name="Carninci P."/>
            <person name="Chao Q."/>
            <person name="Choy N."/>
            <person name="Enju A."/>
            <person name="Goldsmith A.D."/>
            <person name="Gurjal M."/>
            <person name="Hansen N.F."/>
            <person name="Hayashizaki Y."/>
            <person name="Johnson-Hopson C."/>
            <person name="Hsuan V.W."/>
            <person name="Iida K."/>
            <person name="Karnes M."/>
            <person name="Khan S."/>
            <person name="Koesema E."/>
            <person name="Ishida J."/>
            <person name="Jiang P.X."/>
            <person name="Jones T."/>
            <person name="Kawai J."/>
            <person name="Kamiya A."/>
            <person name="Meyers C."/>
            <person name="Nakajima M."/>
            <person name="Narusaka M."/>
            <person name="Seki M."/>
            <person name="Sakurai T."/>
            <person name="Satou M."/>
            <person name="Tamse R."/>
            <person name="Vaysberg M."/>
            <person name="Wallender E.K."/>
            <person name="Wong C."/>
            <person name="Yamamura Y."/>
            <person name="Yuan S."/>
            <person name="Shinozaki K."/>
            <person name="Davis R.W."/>
            <person name="Theologis A."/>
            <person name="Ecker J.R."/>
        </authorList>
    </citation>
    <scope>NUCLEOTIDE SEQUENCE [LARGE SCALE MRNA]</scope>
    <source>
        <strain>cv. Columbia</strain>
    </source>
</reference>
<reference key="4">
    <citation type="journal article" date="2009" name="DNA Res.">
        <title>Analysis of multiple occurrences of alternative splicing events in Arabidopsis thaliana using novel sequenced full-length cDNAs.</title>
        <authorList>
            <person name="Iida K."/>
            <person name="Fukami-Kobayashi K."/>
            <person name="Toyoda A."/>
            <person name="Sakaki Y."/>
            <person name="Kobayashi M."/>
            <person name="Seki M."/>
            <person name="Shinozaki K."/>
        </authorList>
    </citation>
    <scope>NUCLEOTIDE SEQUENCE [LARGE SCALE MRNA]</scope>
    <source>
        <strain>cv. Columbia</strain>
    </source>
</reference>
<reference key="5">
    <citation type="journal article" date="2003" name="Plant J.">
        <title>Protein interaction analysis of SCF ubiquitin E3 ligase subunits from Arabidopsis.</title>
        <authorList>
            <person name="Risseeuw E.P."/>
            <person name="Daskalchuk T.E."/>
            <person name="Banks T.W."/>
            <person name="Liu E."/>
            <person name="Cotelesage J."/>
            <person name="Hellmann H."/>
            <person name="Estelle M."/>
            <person name="Somers D.E."/>
            <person name="Crosby W.L."/>
        </authorList>
    </citation>
    <scope>INTERACTION WITH SKP1A/ASK1 AND SPK1B/ASK2</scope>
</reference>
<accession>Q8L736</accession>
<accession>B9DGL2</accession>
<accession>O80606</accession>
<comment type="function">
    <text evidence="1">Component of SCF(ASK-cullin-F-box) E3 ubiquitin ligase complexes, which may mediate the ubiquitination and subsequent proteasomal degradation of target proteins.</text>
</comment>
<comment type="pathway">
    <text>Protein modification; protein ubiquitination.</text>
</comment>
<comment type="subunit">
    <text evidence="1 3">Part of a SCF (ASK-cullin-F-box) protein ligase complex (By similarity). Interacts with SKP1A/ASK1 and SPK1B/ASK2.</text>
</comment>
<comment type="subcellular location">
    <subcellularLocation>
        <location evidence="1">Nucleus</location>
    </subcellularLocation>
</comment>
<comment type="domain">
    <text evidence="1">The F-box is necessary for the interaction with ASK proteins.</text>
</comment>
<feature type="chain" id="PRO_0000283191" description="F-box/kelch-repeat protein SKIP11">
    <location>
        <begin position="1"/>
        <end position="467"/>
    </location>
</feature>
<feature type="domain" description="F-box">
    <location>
        <begin position="116"/>
        <end position="163"/>
    </location>
</feature>
<feature type="repeat" description="Kelch 1">
    <location>
        <begin position="159"/>
        <end position="210"/>
    </location>
</feature>
<feature type="repeat" description="Kelch 2">
    <location>
        <begin position="215"/>
        <end position="259"/>
    </location>
</feature>
<feature type="repeat" description="Kelch 3">
    <location>
        <begin position="261"/>
        <end position="307"/>
    </location>
</feature>
<feature type="repeat" description="Kelch 4">
    <location>
        <begin position="308"/>
        <end position="356"/>
    </location>
</feature>
<feature type="repeat" description="Kelch 5">
    <location>
        <begin position="365"/>
        <end position="411"/>
    </location>
</feature>
<feature type="region of interest" description="Disordered" evidence="2">
    <location>
        <begin position="77"/>
        <end position="117"/>
    </location>
</feature>
<feature type="compositionally biased region" description="Low complexity" evidence="2">
    <location>
        <begin position="92"/>
        <end position="111"/>
    </location>
</feature>
<feature type="sequence conflict" description="In Ref. 3; AAM98120." evidence="4" ref="3">
    <original>V</original>
    <variation>I</variation>
    <location>
        <position position="394"/>
    </location>
</feature>
<evidence type="ECO:0000250" key="1"/>
<evidence type="ECO:0000256" key="2">
    <source>
        <dbReference type="SAM" id="MobiDB-lite"/>
    </source>
</evidence>
<evidence type="ECO:0000269" key="3">
    <source>
    </source>
</evidence>
<evidence type="ECO:0000305" key="4"/>
<keyword id="KW-0880">Kelch repeat</keyword>
<keyword id="KW-0539">Nucleus</keyword>
<keyword id="KW-1185">Reference proteome</keyword>
<keyword id="KW-0677">Repeat</keyword>
<keyword id="KW-0833">Ubl conjugation pathway</keyword>
<dbReference type="EMBL" id="AC004138">
    <property type="protein sequence ID" value="AAC32908.1"/>
    <property type="molecule type" value="Genomic_DNA"/>
</dbReference>
<dbReference type="EMBL" id="CP002685">
    <property type="protein sequence ID" value="AEC05636.1"/>
    <property type="molecule type" value="Genomic_DNA"/>
</dbReference>
<dbReference type="EMBL" id="CP002685">
    <property type="protein sequence ID" value="AEC05637.1"/>
    <property type="molecule type" value="Genomic_DNA"/>
</dbReference>
<dbReference type="EMBL" id="CP002685">
    <property type="protein sequence ID" value="AEC05638.1"/>
    <property type="molecule type" value="Genomic_DNA"/>
</dbReference>
<dbReference type="EMBL" id="AY060567">
    <property type="protein sequence ID" value="AAL31196.1"/>
    <property type="molecule type" value="mRNA"/>
</dbReference>
<dbReference type="EMBL" id="AY139977">
    <property type="protein sequence ID" value="AAM98120.1"/>
    <property type="molecule type" value="mRNA"/>
</dbReference>
<dbReference type="EMBL" id="BT002216">
    <property type="protein sequence ID" value="AAN72228.1"/>
    <property type="molecule type" value="mRNA"/>
</dbReference>
<dbReference type="EMBL" id="AK317194">
    <property type="protein sequence ID" value="BAH19879.1"/>
    <property type="molecule type" value="mRNA"/>
</dbReference>
<dbReference type="PIR" id="H84441">
    <property type="entry name" value="H84441"/>
</dbReference>
<dbReference type="RefSeq" id="NP_001030959.1">
    <property type="nucleotide sequence ID" value="NM_001035882.1"/>
</dbReference>
<dbReference type="RefSeq" id="NP_001030960.1">
    <property type="nucleotide sequence ID" value="NM_001035883.2"/>
</dbReference>
<dbReference type="RefSeq" id="NP_178390.1">
    <property type="nucleotide sequence ID" value="NM_126342.4"/>
</dbReference>
<dbReference type="SMR" id="Q8L736"/>
<dbReference type="BioGRID" id="220">
    <property type="interactions" value="2"/>
</dbReference>
<dbReference type="FunCoup" id="Q8L736">
    <property type="interactions" value="586"/>
</dbReference>
<dbReference type="IntAct" id="Q8L736">
    <property type="interactions" value="2"/>
</dbReference>
<dbReference type="STRING" id="3702.Q8L736"/>
<dbReference type="PaxDb" id="3702-AT2G02870.1"/>
<dbReference type="ProteomicsDB" id="234529"/>
<dbReference type="EnsemblPlants" id="AT2G02870.1">
    <property type="protein sequence ID" value="AT2G02870.1"/>
    <property type="gene ID" value="AT2G02870"/>
</dbReference>
<dbReference type="EnsemblPlants" id="AT2G02870.2">
    <property type="protein sequence ID" value="AT2G02870.2"/>
    <property type="gene ID" value="AT2G02870"/>
</dbReference>
<dbReference type="EnsemblPlants" id="AT2G02870.3">
    <property type="protein sequence ID" value="AT2G02870.3"/>
    <property type="gene ID" value="AT2G02870"/>
</dbReference>
<dbReference type="GeneID" id="814818"/>
<dbReference type="Gramene" id="AT2G02870.1">
    <property type="protein sequence ID" value="AT2G02870.1"/>
    <property type="gene ID" value="AT2G02870"/>
</dbReference>
<dbReference type="Gramene" id="AT2G02870.2">
    <property type="protein sequence ID" value="AT2G02870.2"/>
    <property type="gene ID" value="AT2G02870"/>
</dbReference>
<dbReference type="Gramene" id="AT2G02870.3">
    <property type="protein sequence ID" value="AT2G02870.3"/>
    <property type="gene ID" value="AT2G02870"/>
</dbReference>
<dbReference type="KEGG" id="ath:AT2G02870"/>
<dbReference type="Araport" id="AT2G02870"/>
<dbReference type="TAIR" id="AT2G02870"/>
<dbReference type="eggNOG" id="KOG1072">
    <property type="taxonomic scope" value="Eukaryota"/>
</dbReference>
<dbReference type="HOGENOM" id="CLU_028510_0_1_1"/>
<dbReference type="InParanoid" id="Q8L736"/>
<dbReference type="OMA" id="YHIDRID"/>
<dbReference type="OrthoDB" id="191037at2759"/>
<dbReference type="PhylomeDB" id="Q8L736"/>
<dbReference type="UniPathway" id="UPA00143"/>
<dbReference type="PRO" id="PR:Q8L736"/>
<dbReference type="Proteomes" id="UP000006548">
    <property type="component" value="Chromosome 2"/>
</dbReference>
<dbReference type="ExpressionAtlas" id="Q8L736">
    <property type="expression patterns" value="baseline and differential"/>
</dbReference>
<dbReference type="GO" id="GO:0005634">
    <property type="term" value="C:nucleus"/>
    <property type="evidence" value="ECO:0000314"/>
    <property type="project" value="TAIR"/>
</dbReference>
<dbReference type="GO" id="GO:0016567">
    <property type="term" value="P:protein ubiquitination"/>
    <property type="evidence" value="ECO:0007669"/>
    <property type="project" value="UniProtKB-UniPathway"/>
</dbReference>
<dbReference type="FunFam" id="2.120.10.80:FF:000007">
    <property type="entry name" value="F-box/kelch-repeat protein SKIP11"/>
    <property type="match status" value="1"/>
</dbReference>
<dbReference type="Gene3D" id="2.120.10.80">
    <property type="entry name" value="Kelch-type beta propeller"/>
    <property type="match status" value="1"/>
</dbReference>
<dbReference type="InterPro" id="IPR052439">
    <property type="entry name" value="F-box/Kelch-repeat"/>
</dbReference>
<dbReference type="InterPro" id="IPR015915">
    <property type="entry name" value="Kelch-typ_b-propeller"/>
</dbReference>
<dbReference type="InterPro" id="IPR006652">
    <property type="entry name" value="Kelch_1"/>
</dbReference>
<dbReference type="PANTHER" id="PTHR46122:SF2">
    <property type="entry name" value="F-BOX_KELCH-REPEAT PROTEIN SKIP11"/>
    <property type="match status" value="1"/>
</dbReference>
<dbReference type="PANTHER" id="PTHR46122">
    <property type="entry name" value="GALACTOSE OXIDASE/KELCH REPEAT PROTEIN-RELATED"/>
    <property type="match status" value="1"/>
</dbReference>
<dbReference type="Pfam" id="PF01344">
    <property type="entry name" value="Kelch_1"/>
    <property type="match status" value="3"/>
</dbReference>
<dbReference type="SMART" id="SM00612">
    <property type="entry name" value="Kelch"/>
    <property type="match status" value="3"/>
</dbReference>
<dbReference type="SUPFAM" id="SSF117281">
    <property type="entry name" value="Kelch motif"/>
    <property type="match status" value="1"/>
</dbReference>
<name>SKI11_ARATH</name>
<organism>
    <name type="scientific">Arabidopsis thaliana</name>
    <name type="common">Mouse-ear cress</name>
    <dbReference type="NCBI Taxonomy" id="3702"/>
    <lineage>
        <taxon>Eukaryota</taxon>
        <taxon>Viridiplantae</taxon>
        <taxon>Streptophyta</taxon>
        <taxon>Embryophyta</taxon>
        <taxon>Tracheophyta</taxon>
        <taxon>Spermatophyta</taxon>
        <taxon>Magnoliopsida</taxon>
        <taxon>eudicotyledons</taxon>
        <taxon>Gunneridae</taxon>
        <taxon>Pentapetalae</taxon>
        <taxon>rosids</taxon>
        <taxon>malvids</taxon>
        <taxon>Brassicales</taxon>
        <taxon>Brassicaceae</taxon>
        <taxon>Camelineae</taxon>
        <taxon>Arabidopsis</taxon>
    </lineage>
</organism>
<sequence>MLEDRSPDSCLSTRVFSSSRLSESNWSNSYMYPEDDDKLLGNGKRALEVVGEVRQTKSLKLMGFSIIYDSDSSDYSLSGGEEQADAAIGDGSSSRQEQEQQSDFNDNGGDSSDSHSLINEIGRDNSIDCLIRCSRSDYGSIASLNRNFRSLVKSGEIYRLRRQNGFVEHWVYFSCQLLEWVAFDPVERRWMQLPTMPSSVTFMCADKESLAVGTDLLVLGKDDFSSHVIYRYSLLTNSWSSGMKMNSPRCLFGSASLGEIAIFAGGCDSQGKILDFAEMYNSELQTWITLPRMNKPRKMCSGVFMDGKFYVIGGIGGADSKGLTCGEEYDLETKKWTQIPDLSPPRSRADQADMSPAAEAPPLVAVVNNQLYAADHADMEVRKYDKENKKWLTVGRLPERAGSVNGWGLAFRACGERLIVIGGPKCSGGGFIELNSWIPSDGGPPQWTLLDRKHSPTFVYNCAVMGC</sequence>
<proteinExistence type="evidence at protein level"/>